<keyword id="KW-0012">Acyltransferase</keyword>
<keyword id="KW-0963">Cytoplasm</keyword>
<keyword id="KW-0808">Transferase</keyword>
<name>LIPB_PSE14</name>
<protein>
    <recommendedName>
        <fullName evidence="1">Octanoyltransferase</fullName>
        <ecNumber evidence="1">2.3.1.181</ecNumber>
    </recommendedName>
    <alternativeName>
        <fullName evidence="1">Lipoate-protein ligase B</fullName>
    </alternativeName>
    <alternativeName>
        <fullName evidence="1">Lipoyl/octanoyl transferase</fullName>
    </alternativeName>
    <alternativeName>
        <fullName evidence="1">Octanoyl-[acyl-carrier-protein]-protein N-octanoyltransferase</fullName>
    </alternativeName>
</protein>
<organism>
    <name type="scientific">Pseudomonas savastanoi pv. phaseolicola (strain 1448A / Race 6)</name>
    <name type="common">Pseudomonas syringae pv. phaseolicola (strain 1448A / Race 6)</name>
    <dbReference type="NCBI Taxonomy" id="264730"/>
    <lineage>
        <taxon>Bacteria</taxon>
        <taxon>Pseudomonadati</taxon>
        <taxon>Pseudomonadota</taxon>
        <taxon>Gammaproteobacteria</taxon>
        <taxon>Pseudomonadales</taxon>
        <taxon>Pseudomonadaceae</taxon>
        <taxon>Pseudomonas</taxon>
    </lineage>
</organism>
<feature type="chain" id="PRO_0000242748" description="Octanoyltransferase">
    <location>
        <begin position="1"/>
        <end position="218"/>
    </location>
</feature>
<feature type="domain" description="BPL/LPL catalytic" evidence="2">
    <location>
        <begin position="31"/>
        <end position="206"/>
    </location>
</feature>
<feature type="active site" description="Acyl-thioester intermediate" evidence="1">
    <location>
        <position position="168"/>
    </location>
</feature>
<feature type="binding site" evidence="1">
    <location>
        <begin position="70"/>
        <end position="77"/>
    </location>
    <ligand>
        <name>substrate</name>
    </ligand>
</feature>
<feature type="binding site" evidence="1">
    <location>
        <begin position="137"/>
        <end position="139"/>
    </location>
    <ligand>
        <name>substrate</name>
    </ligand>
</feature>
<feature type="binding site" evidence="1">
    <location>
        <begin position="150"/>
        <end position="152"/>
    </location>
    <ligand>
        <name>substrate</name>
    </ligand>
</feature>
<feature type="site" description="Lowers pKa of active site Cys" evidence="1">
    <location>
        <position position="134"/>
    </location>
</feature>
<gene>
    <name evidence="1" type="primary">lipB</name>
    <name type="ordered locus">PSPPH_4400</name>
</gene>
<comment type="function">
    <text evidence="1">Catalyzes the transfer of endogenously produced octanoic acid from octanoyl-acyl-carrier-protein onto the lipoyl domains of lipoate-dependent enzymes. Lipoyl-ACP can also act as a substrate although octanoyl-ACP is likely to be the physiological substrate.</text>
</comment>
<comment type="catalytic activity">
    <reaction evidence="1">
        <text>octanoyl-[ACP] + L-lysyl-[protein] = N(6)-octanoyl-L-lysyl-[protein] + holo-[ACP] + H(+)</text>
        <dbReference type="Rhea" id="RHEA:17665"/>
        <dbReference type="Rhea" id="RHEA-COMP:9636"/>
        <dbReference type="Rhea" id="RHEA-COMP:9685"/>
        <dbReference type="Rhea" id="RHEA-COMP:9752"/>
        <dbReference type="Rhea" id="RHEA-COMP:9928"/>
        <dbReference type="ChEBI" id="CHEBI:15378"/>
        <dbReference type="ChEBI" id="CHEBI:29969"/>
        <dbReference type="ChEBI" id="CHEBI:64479"/>
        <dbReference type="ChEBI" id="CHEBI:78463"/>
        <dbReference type="ChEBI" id="CHEBI:78809"/>
        <dbReference type="EC" id="2.3.1.181"/>
    </reaction>
</comment>
<comment type="pathway">
    <text evidence="1">Protein modification; protein lipoylation via endogenous pathway; protein N(6)-(lipoyl)lysine from octanoyl-[acyl-carrier-protein]: step 1/2.</text>
</comment>
<comment type="subcellular location">
    <subcellularLocation>
        <location evidence="1">Cytoplasm</location>
    </subcellularLocation>
</comment>
<comment type="miscellaneous">
    <text evidence="1">In the reaction, the free carboxyl group of octanoic acid is attached via an amide linkage to the epsilon-amino group of a specific lysine residue of lipoyl domains of lipoate-dependent enzymes.</text>
</comment>
<comment type="similarity">
    <text evidence="1">Belongs to the LipB family.</text>
</comment>
<dbReference type="EC" id="2.3.1.181" evidence="1"/>
<dbReference type="EMBL" id="CP000058">
    <property type="protein sequence ID" value="AAZ33487.1"/>
    <property type="molecule type" value="Genomic_DNA"/>
</dbReference>
<dbReference type="RefSeq" id="WP_002555328.1">
    <property type="nucleotide sequence ID" value="NC_005773.3"/>
</dbReference>
<dbReference type="SMR" id="Q48DM5"/>
<dbReference type="KEGG" id="psp:PSPPH_4400"/>
<dbReference type="eggNOG" id="COG0321">
    <property type="taxonomic scope" value="Bacteria"/>
</dbReference>
<dbReference type="HOGENOM" id="CLU_035168_3_1_6"/>
<dbReference type="UniPathway" id="UPA00538">
    <property type="reaction ID" value="UER00592"/>
</dbReference>
<dbReference type="Proteomes" id="UP000000551">
    <property type="component" value="Chromosome"/>
</dbReference>
<dbReference type="GO" id="GO:0005737">
    <property type="term" value="C:cytoplasm"/>
    <property type="evidence" value="ECO:0007669"/>
    <property type="project" value="UniProtKB-SubCell"/>
</dbReference>
<dbReference type="GO" id="GO:0033819">
    <property type="term" value="F:lipoyl(octanoyl) transferase activity"/>
    <property type="evidence" value="ECO:0007669"/>
    <property type="project" value="UniProtKB-EC"/>
</dbReference>
<dbReference type="GO" id="GO:0036211">
    <property type="term" value="P:protein modification process"/>
    <property type="evidence" value="ECO:0007669"/>
    <property type="project" value="InterPro"/>
</dbReference>
<dbReference type="CDD" id="cd16444">
    <property type="entry name" value="LipB"/>
    <property type="match status" value="1"/>
</dbReference>
<dbReference type="FunFam" id="3.30.930.10:FF:000020">
    <property type="entry name" value="Octanoyltransferase"/>
    <property type="match status" value="1"/>
</dbReference>
<dbReference type="Gene3D" id="3.30.930.10">
    <property type="entry name" value="Bira Bifunctional Protein, Domain 2"/>
    <property type="match status" value="1"/>
</dbReference>
<dbReference type="HAMAP" id="MF_00013">
    <property type="entry name" value="LipB"/>
    <property type="match status" value="1"/>
</dbReference>
<dbReference type="InterPro" id="IPR045864">
    <property type="entry name" value="aa-tRNA-synth_II/BPL/LPL"/>
</dbReference>
<dbReference type="InterPro" id="IPR004143">
    <property type="entry name" value="BPL_LPL_catalytic"/>
</dbReference>
<dbReference type="InterPro" id="IPR000544">
    <property type="entry name" value="Octanoyltransferase"/>
</dbReference>
<dbReference type="InterPro" id="IPR020605">
    <property type="entry name" value="Octanoyltransferase_CS"/>
</dbReference>
<dbReference type="NCBIfam" id="TIGR00214">
    <property type="entry name" value="lipB"/>
    <property type="match status" value="1"/>
</dbReference>
<dbReference type="NCBIfam" id="NF010922">
    <property type="entry name" value="PRK14342.1"/>
    <property type="match status" value="1"/>
</dbReference>
<dbReference type="NCBIfam" id="NF010925">
    <property type="entry name" value="PRK14345.1"/>
    <property type="match status" value="1"/>
</dbReference>
<dbReference type="PANTHER" id="PTHR10993:SF7">
    <property type="entry name" value="LIPOYLTRANSFERASE 2, MITOCHONDRIAL-RELATED"/>
    <property type="match status" value="1"/>
</dbReference>
<dbReference type="PANTHER" id="PTHR10993">
    <property type="entry name" value="OCTANOYLTRANSFERASE"/>
    <property type="match status" value="1"/>
</dbReference>
<dbReference type="Pfam" id="PF21948">
    <property type="entry name" value="LplA-B_cat"/>
    <property type="match status" value="1"/>
</dbReference>
<dbReference type="PIRSF" id="PIRSF016262">
    <property type="entry name" value="LPLase"/>
    <property type="match status" value="1"/>
</dbReference>
<dbReference type="SUPFAM" id="SSF55681">
    <property type="entry name" value="Class II aaRS and biotin synthetases"/>
    <property type="match status" value="1"/>
</dbReference>
<dbReference type="PROSITE" id="PS51733">
    <property type="entry name" value="BPL_LPL_CATALYTIC"/>
    <property type="match status" value="1"/>
</dbReference>
<dbReference type="PROSITE" id="PS01313">
    <property type="entry name" value="LIPB"/>
    <property type="match status" value="1"/>
</dbReference>
<evidence type="ECO:0000255" key="1">
    <source>
        <dbReference type="HAMAP-Rule" id="MF_00013"/>
    </source>
</evidence>
<evidence type="ECO:0000255" key="2">
    <source>
        <dbReference type="PROSITE-ProRule" id="PRU01067"/>
    </source>
</evidence>
<sequence>MTVALGFRDLGLIDYETAWHAMQRFTDGRGREAADEVWLVQHPPVFTQGQSGKAEHLLLPGNIPVVQVDRGGQVTYHGPGQLVAYLMLDVRRLGFGVRDLVTRIENTLIALLADYGVKAAAKADAPGVYVDGAKIASLGLRIRNGCSFHGLALNVDMDLEPFRRINPCGYAGLAMTQLSDQAGQIEFSEVSARLRAQLVKHLDYAEQATLTGGINHYD</sequence>
<reference key="1">
    <citation type="journal article" date="2005" name="J. Bacteriol.">
        <title>Whole-genome sequence analysis of Pseudomonas syringae pv. phaseolicola 1448A reveals divergence among pathovars in genes involved in virulence and transposition.</title>
        <authorList>
            <person name="Joardar V."/>
            <person name="Lindeberg M."/>
            <person name="Jackson R.W."/>
            <person name="Selengut J."/>
            <person name="Dodson R."/>
            <person name="Brinkac L.M."/>
            <person name="Daugherty S.C."/>
            <person name="DeBoy R.T."/>
            <person name="Durkin A.S."/>
            <person name="Gwinn Giglio M."/>
            <person name="Madupu R."/>
            <person name="Nelson W.C."/>
            <person name="Rosovitz M.J."/>
            <person name="Sullivan S.A."/>
            <person name="Crabtree J."/>
            <person name="Creasy T."/>
            <person name="Davidsen T.M."/>
            <person name="Haft D.H."/>
            <person name="Zafar N."/>
            <person name="Zhou L."/>
            <person name="Halpin R."/>
            <person name="Holley T."/>
            <person name="Khouri H.M."/>
            <person name="Feldblyum T.V."/>
            <person name="White O."/>
            <person name="Fraser C.M."/>
            <person name="Chatterjee A.K."/>
            <person name="Cartinhour S."/>
            <person name="Schneider D."/>
            <person name="Mansfield J.W."/>
            <person name="Collmer A."/>
            <person name="Buell R."/>
        </authorList>
    </citation>
    <scope>NUCLEOTIDE SEQUENCE [LARGE SCALE GENOMIC DNA]</scope>
    <source>
        <strain>1448A / Race 6</strain>
    </source>
</reference>
<accession>Q48DM5</accession>
<proteinExistence type="inferred from homology"/>